<dbReference type="EC" id="1.14.99.46" evidence="1"/>
<dbReference type="EMBL" id="FN554766">
    <property type="protein sequence ID" value="CBG33909.1"/>
    <property type="molecule type" value="Genomic_DNA"/>
</dbReference>
<dbReference type="RefSeq" id="WP_014639125.1">
    <property type="nucleotide sequence ID" value="NC_017626.1"/>
</dbReference>
<dbReference type="SMR" id="D3H125"/>
<dbReference type="KEGG" id="elo:EC042_1087"/>
<dbReference type="PATRIC" id="fig|216592.3.peg.1125"/>
<dbReference type="HOGENOM" id="CLU_027853_1_1_6"/>
<dbReference type="Proteomes" id="UP000001407">
    <property type="component" value="Chromosome"/>
</dbReference>
<dbReference type="GO" id="GO:0008726">
    <property type="term" value="F:alkanesulfonate monooxygenase activity"/>
    <property type="evidence" value="ECO:0007669"/>
    <property type="project" value="TreeGrafter"/>
</dbReference>
<dbReference type="GO" id="GO:0052614">
    <property type="term" value="F:uracil oxygenase activity"/>
    <property type="evidence" value="ECO:0007669"/>
    <property type="project" value="UniProtKB-EC"/>
</dbReference>
<dbReference type="GO" id="GO:0046306">
    <property type="term" value="P:alkanesulfonate catabolic process"/>
    <property type="evidence" value="ECO:0007669"/>
    <property type="project" value="TreeGrafter"/>
</dbReference>
<dbReference type="GO" id="GO:0019740">
    <property type="term" value="P:nitrogen utilization"/>
    <property type="evidence" value="ECO:0007669"/>
    <property type="project" value="UniProtKB-UniRule"/>
</dbReference>
<dbReference type="GO" id="GO:0006212">
    <property type="term" value="P:uracil catabolic process"/>
    <property type="evidence" value="ECO:0007669"/>
    <property type="project" value="UniProtKB-UniRule"/>
</dbReference>
<dbReference type="CDD" id="cd01094">
    <property type="entry name" value="Alkanesulfonate_monoxygenase"/>
    <property type="match status" value="1"/>
</dbReference>
<dbReference type="FunFam" id="3.20.20.30:FF:000003">
    <property type="entry name" value="Pyrimidine monooxygenase RutA"/>
    <property type="match status" value="1"/>
</dbReference>
<dbReference type="Gene3D" id="3.20.20.30">
    <property type="entry name" value="Luciferase-like domain"/>
    <property type="match status" value="1"/>
</dbReference>
<dbReference type="HAMAP" id="MF_01699">
    <property type="entry name" value="RutA"/>
    <property type="match status" value="1"/>
</dbReference>
<dbReference type="InterPro" id="IPR011251">
    <property type="entry name" value="Luciferase-like_dom"/>
</dbReference>
<dbReference type="InterPro" id="IPR036661">
    <property type="entry name" value="Luciferase-like_sf"/>
</dbReference>
<dbReference type="InterPro" id="IPR019914">
    <property type="entry name" value="Pyrimidine_monooxygenase_RutA"/>
</dbReference>
<dbReference type="InterPro" id="IPR050172">
    <property type="entry name" value="SsuD_RutA_monooxygenase"/>
</dbReference>
<dbReference type="NCBIfam" id="TIGR03612">
    <property type="entry name" value="RutA"/>
    <property type="match status" value="1"/>
</dbReference>
<dbReference type="PANTHER" id="PTHR42847">
    <property type="entry name" value="ALKANESULFONATE MONOOXYGENASE"/>
    <property type="match status" value="1"/>
</dbReference>
<dbReference type="PANTHER" id="PTHR42847:SF4">
    <property type="entry name" value="ALKANESULFONATE MONOOXYGENASE-RELATED"/>
    <property type="match status" value="1"/>
</dbReference>
<dbReference type="Pfam" id="PF00296">
    <property type="entry name" value="Bac_luciferase"/>
    <property type="match status" value="1"/>
</dbReference>
<dbReference type="SUPFAM" id="SSF51679">
    <property type="entry name" value="Bacterial luciferase-like"/>
    <property type="match status" value="1"/>
</dbReference>
<organism>
    <name type="scientific">Escherichia coli O44:H18 (strain 042 / EAEC)</name>
    <dbReference type="NCBI Taxonomy" id="216592"/>
    <lineage>
        <taxon>Bacteria</taxon>
        <taxon>Pseudomonadati</taxon>
        <taxon>Pseudomonadota</taxon>
        <taxon>Gammaproteobacteria</taxon>
        <taxon>Enterobacterales</taxon>
        <taxon>Enterobacteriaceae</taxon>
        <taxon>Escherichia</taxon>
    </lineage>
</organism>
<gene>
    <name evidence="1" type="primary">rutA</name>
    <name type="ordered locus">EC042_1087</name>
</gene>
<keyword id="KW-0285">Flavoprotein</keyword>
<keyword id="KW-0288">FMN</keyword>
<keyword id="KW-0503">Monooxygenase</keyword>
<keyword id="KW-0521">NADP</keyword>
<keyword id="KW-0560">Oxidoreductase</keyword>
<name>RUTA_ECO44</name>
<proteinExistence type="inferred from homology"/>
<evidence type="ECO:0000255" key="1">
    <source>
        <dbReference type="HAMAP-Rule" id="MF_01699"/>
    </source>
</evidence>
<feature type="chain" id="PRO_0000402615" description="Pyrimidine monooxygenase RutA">
    <location>
        <begin position="1"/>
        <end position="363"/>
    </location>
</feature>
<feature type="binding site" evidence="1">
    <location>
        <begin position="49"/>
        <end position="50"/>
    </location>
    <ligand>
        <name>FMN</name>
        <dbReference type="ChEBI" id="CHEBI:58210"/>
    </ligand>
</feature>
<feature type="binding site" evidence="1">
    <location>
        <position position="115"/>
    </location>
    <ligand>
        <name>FMN</name>
        <dbReference type="ChEBI" id="CHEBI:58210"/>
    </ligand>
</feature>
<feature type="binding site" evidence="1">
    <location>
        <position position="124"/>
    </location>
    <ligand>
        <name>FMN</name>
        <dbReference type="ChEBI" id="CHEBI:58210"/>
    </ligand>
</feature>
<feature type="binding site" evidence="1">
    <location>
        <begin position="140"/>
        <end position="141"/>
    </location>
    <ligand>
        <name>FMN</name>
        <dbReference type="ChEBI" id="CHEBI:58210"/>
    </ligand>
</feature>
<feature type="binding site" evidence="1">
    <location>
        <position position="190"/>
    </location>
    <ligand>
        <name>FMN</name>
        <dbReference type="ChEBI" id="CHEBI:58210"/>
    </ligand>
</feature>
<comment type="function">
    <text evidence="1">Catalyzes the pyrimidine ring opening between N-3 and C-4 by an unusual flavin hydroperoxide-catalyzed mechanism, adding oxygen atoms in the process to yield ureidoacrylate peracid, that immediately reacts with FMN forming ureidoacrylate and FMN-N(5)-oxide. The FMN-N(5)-oxide reacts spontaneously with NADH to produce FMN. Requires the flavin reductase RutF to regenerate FMN in vivo.</text>
</comment>
<comment type="catalytic activity">
    <reaction evidence="1">
        <text>uracil + FMNH2 + NADH + O2 = (Z)-3-ureidoacrylate + FMN + NAD(+) + H2O + H(+)</text>
        <dbReference type="Rhea" id="RHEA:31587"/>
        <dbReference type="ChEBI" id="CHEBI:15377"/>
        <dbReference type="ChEBI" id="CHEBI:15378"/>
        <dbReference type="ChEBI" id="CHEBI:15379"/>
        <dbReference type="ChEBI" id="CHEBI:17568"/>
        <dbReference type="ChEBI" id="CHEBI:57540"/>
        <dbReference type="ChEBI" id="CHEBI:57618"/>
        <dbReference type="ChEBI" id="CHEBI:57945"/>
        <dbReference type="ChEBI" id="CHEBI:58210"/>
        <dbReference type="ChEBI" id="CHEBI:59891"/>
        <dbReference type="EC" id="1.14.99.46"/>
    </reaction>
</comment>
<comment type="catalytic activity">
    <reaction evidence="1">
        <text>thymine + FMNH2 + NADH + O2 = (Z)-2-methylureidoacrylate + FMN + NAD(+) + H2O + H(+)</text>
        <dbReference type="Rhea" id="RHEA:31599"/>
        <dbReference type="ChEBI" id="CHEBI:15377"/>
        <dbReference type="ChEBI" id="CHEBI:15378"/>
        <dbReference type="ChEBI" id="CHEBI:15379"/>
        <dbReference type="ChEBI" id="CHEBI:17821"/>
        <dbReference type="ChEBI" id="CHEBI:57540"/>
        <dbReference type="ChEBI" id="CHEBI:57618"/>
        <dbReference type="ChEBI" id="CHEBI:57945"/>
        <dbReference type="ChEBI" id="CHEBI:58210"/>
        <dbReference type="ChEBI" id="CHEBI:143783"/>
        <dbReference type="EC" id="1.14.99.46"/>
    </reaction>
</comment>
<comment type="induction">
    <text evidence="1">Up-regulated by the nitrogen regulatory protein C (NtrC also called GlnG) and repressed by RutR.</text>
</comment>
<comment type="similarity">
    <text evidence="1">Belongs to the NtaA/SnaA/DszA monooxygenase family. RutA subfamily.</text>
</comment>
<sequence>MKIGVFVPIGNNGWLISTHAPQYMPTFELNKAIVQKAEHYHFDFALSMIKLRGFGGKTEFWDHNLESFTLMAGLAAVTSRIQIYATAATLTLPPAIVARMAATIDSISGGRFGVNLVTGWQKPEYEQMGIWPGDDYFSRRYDYLTEYVQVLRDLWGTGKSDFKGDFFTMNDCRVSPQPSVPMKVICAGQSDAGMAFSAQYADFNFCFGKGVNTPTAFAPTAARMKQAAEQTGRDVGSYVLFMVIADETDDAARTKWEHYKAGADEEALSWLTEQSQKDTRSGTDTNVRQMADPTSAVNINMGTLVGSYASVARMLDEVASVPGAEGVLLTFDDFLSGIETFGERIQPLMQCRAHLPTLTQEVA</sequence>
<reference key="1">
    <citation type="journal article" date="2010" name="PLoS ONE">
        <title>Complete genome sequence and comparative metabolic profiling of the prototypical enteroaggregative Escherichia coli strain 042.</title>
        <authorList>
            <person name="Chaudhuri R.R."/>
            <person name="Sebaihia M."/>
            <person name="Hobman J.L."/>
            <person name="Webber M.A."/>
            <person name="Leyton D.L."/>
            <person name="Goldberg M.D."/>
            <person name="Cunningham A.F."/>
            <person name="Scott-Tucker A."/>
            <person name="Ferguson P.R."/>
            <person name="Thomas C.M."/>
            <person name="Frankel G."/>
            <person name="Tang C.M."/>
            <person name="Dudley E.G."/>
            <person name="Roberts I.S."/>
            <person name="Rasko D.A."/>
            <person name="Pallen M.J."/>
            <person name="Parkhill J."/>
            <person name="Nataro J.P."/>
            <person name="Thomson N.R."/>
            <person name="Henderson I.R."/>
        </authorList>
    </citation>
    <scope>NUCLEOTIDE SEQUENCE [LARGE SCALE GENOMIC DNA]</scope>
    <source>
        <strain>042 / EAEC</strain>
    </source>
</reference>
<accession>D3H125</accession>
<protein>
    <recommendedName>
        <fullName evidence="1">Pyrimidine monooxygenase RutA</fullName>
        <ecNumber evidence="1">1.14.99.46</ecNumber>
    </recommendedName>
</protein>